<gene>
    <name evidence="1" type="primary">groEL2</name>
    <name evidence="1" type="synonym">groL2</name>
    <name type="ordered locus">SCO4296</name>
    <name type="ORF">SCD95A.29</name>
</gene>
<dbReference type="EC" id="5.6.1.7" evidence="1"/>
<dbReference type="EMBL" id="AL939119">
    <property type="protein sequence ID" value="CAB93056.1"/>
    <property type="molecule type" value="Genomic_DNA"/>
</dbReference>
<dbReference type="RefSeq" id="NP_628468.1">
    <property type="nucleotide sequence ID" value="NC_003888.3"/>
</dbReference>
<dbReference type="SMR" id="Q9KXU5"/>
<dbReference type="FunCoup" id="Q9KXU5">
    <property type="interactions" value="389"/>
</dbReference>
<dbReference type="STRING" id="100226.gene:17761941"/>
<dbReference type="PaxDb" id="100226-SCO4296"/>
<dbReference type="KEGG" id="sco:SCO4296"/>
<dbReference type="PATRIC" id="fig|100226.15.peg.4364"/>
<dbReference type="eggNOG" id="COG0459">
    <property type="taxonomic scope" value="Bacteria"/>
</dbReference>
<dbReference type="HOGENOM" id="CLU_016503_3_0_11"/>
<dbReference type="InParanoid" id="Q9KXU5"/>
<dbReference type="OrthoDB" id="9766614at2"/>
<dbReference type="PhylomeDB" id="Q9KXU5"/>
<dbReference type="Proteomes" id="UP000001973">
    <property type="component" value="Chromosome"/>
</dbReference>
<dbReference type="GO" id="GO:1990220">
    <property type="term" value="C:GroEL-GroES complex"/>
    <property type="evidence" value="ECO:0000318"/>
    <property type="project" value="GO_Central"/>
</dbReference>
<dbReference type="GO" id="GO:0005524">
    <property type="term" value="F:ATP binding"/>
    <property type="evidence" value="ECO:0000318"/>
    <property type="project" value="GO_Central"/>
</dbReference>
<dbReference type="GO" id="GO:0140662">
    <property type="term" value="F:ATP-dependent protein folding chaperone"/>
    <property type="evidence" value="ECO:0007669"/>
    <property type="project" value="InterPro"/>
</dbReference>
<dbReference type="GO" id="GO:0016853">
    <property type="term" value="F:isomerase activity"/>
    <property type="evidence" value="ECO:0007669"/>
    <property type="project" value="UniProtKB-KW"/>
</dbReference>
<dbReference type="GO" id="GO:0051082">
    <property type="term" value="F:unfolded protein binding"/>
    <property type="evidence" value="ECO:0000318"/>
    <property type="project" value="GO_Central"/>
</dbReference>
<dbReference type="GO" id="GO:0051085">
    <property type="term" value="P:chaperone cofactor-dependent protein refolding"/>
    <property type="evidence" value="ECO:0000318"/>
    <property type="project" value="GO_Central"/>
</dbReference>
<dbReference type="GO" id="GO:0042026">
    <property type="term" value="P:protein refolding"/>
    <property type="evidence" value="ECO:0007669"/>
    <property type="project" value="UniProtKB-UniRule"/>
</dbReference>
<dbReference type="GO" id="GO:0009408">
    <property type="term" value="P:response to heat"/>
    <property type="evidence" value="ECO:0000318"/>
    <property type="project" value="GO_Central"/>
</dbReference>
<dbReference type="CDD" id="cd03344">
    <property type="entry name" value="GroEL"/>
    <property type="match status" value="1"/>
</dbReference>
<dbReference type="FunFam" id="3.50.7.10:FF:000001">
    <property type="entry name" value="60 kDa chaperonin"/>
    <property type="match status" value="1"/>
</dbReference>
<dbReference type="Gene3D" id="3.50.7.10">
    <property type="entry name" value="GroEL"/>
    <property type="match status" value="1"/>
</dbReference>
<dbReference type="Gene3D" id="1.10.560.10">
    <property type="entry name" value="GroEL-like equatorial domain"/>
    <property type="match status" value="1"/>
</dbReference>
<dbReference type="Gene3D" id="3.30.260.10">
    <property type="entry name" value="TCP-1-like chaperonin intermediate domain"/>
    <property type="match status" value="1"/>
</dbReference>
<dbReference type="HAMAP" id="MF_00600">
    <property type="entry name" value="CH60"/>
    <property type="match status" value="1"/>
</dbReference>
<dbReference type="InterPro" id="IPR018370">
    <property type="entry name" value="Chaperonin_Cpn60_CS"/>
</dbReference>
<dbReference type="InterPro" id="IPR001844">
    <property type="entry name" value="Cpn60/GroEL"/>
</dbReference>
<dbReference type="InterPro" id="IPR002423">
    <property type="entry name" value="Cpn60/GroEL/TCP-1"/>
</dbReference>
<dbReference type="InterPro" id="IPR027409">
    <property type="entry name" value="GroEL-like_apical_dom_sf"/>
</dbReference>
<dbReference type="InterPro" id="IPR027413">
    <property type="entry name" value="GROEL-like_equatorial_sf"/>
</dbReference>
<dbReference type="InterPro" id="IPR027410">
    <property type="entry name" value="TCP-1-like_intermed_sf"/>
</dbReference>
<dbReference type="NCBIfam" id="TIGR02348">
    <property type="entry name" value="GroEL"/>
    <property type="match status" value="1"/>
</dbReference>
<dbReference type="NCBIfam" id="NF000592">
    <property type="entry name" value="PRK00013.1"/>
    <property type="match status" value="1"/>
</dbReference>
<dbReference type="NCBIfam" id="NF009487">
    <property type="entry name" value="PRK12849.1"/>
    <property type="match status" value="1"/>
</dbReference>
<dbReference type="NCBIfam" id="NF009488">
    <property type="entry name" value="PRK12850.1"/>
    <property type="match status" value="1"/>
</dbReference>
<dbReference type="NCBIfam" id="NF009489">
    <property type="entry name" value="PRK12851.1"/>
    <property type="match status" value="1"/>
</dbReference>
<dbReference type="PANTHER" id="PTHR45633">
    <property type="entry name" value="60 KDA HEAT SHOCK PROTEIN, MITOCHONDRIAL"/>
    <property type="match status" value="1"/>
</dbReference>
<dbReference type="Pfam" id="PF00118">
    <property type="entry name" value="Cpn60_TCP1"/>
    <property type="match status" value="1"/>
</dbReference>
<dbReference type="PRINTS" id="PR00298">
    <property type="entry name" value="CHAPERONIN60"/>
</dbReference>
<dbReference type="SUPFAM" id="SSF52029">
    <property type="entry name" value="GroEL apical domain-like"/>
    <property type="match status" value="1"/>
</dbReference>
<dbReference type="SUPFAM" id="SSF48592">
    <property type="entry name" value="GroEL equatorial domain-like"/>
    <property type="match status" value="1"/>
</dbReference>
<dbReference type="SUPFAM" id="SSF54849">
    <property type="entry name" value="GroEL-intermediate domain like"/>
    <property type="match status" value="1"/>
</dbReference>
<dbReference type="PROSITE" id="PS00296">
    <property type="entry name" value="CHAPERONINS_CPN60"/>
    <property type="match status" value="1"/>
</dbReference>
<accession>Q9KXU5</accession>
<reference key="1">
    <citation type="journal article" date="2002" name="Nature">
        <title>Complete genome sequence of the model actinomycete Streptomyces coelicolor A3(2).</title>
        <authorList>
            <person name="Bentley S.D."/>
            <person name="Chater K.F."/>
            <person name="Cerdeno-Tarraga A.-M."/>
            <person name="Challis G.L."/>
            <person name="Thomson N.R."/>
            <person name="James K.D."/>
            <person name="Harris D.E."/>
            <person name="Quail M.A."/>
            <person name="Kieser H."/>
            <person name="Harper D."/>
            <person name="Bateman A."/>
            <person name="Brown S."/>
            <person name="Chandra G."/>
            <person name="Chen C.W."/>
            <person name="Collins M."/>
            <person name="Cronin A."/>
            <person name="Fraser A."/>
            <person name="Goble A."/>
            <person name="Hidalgo J."/>
            <person name="Hornsby T."/>
            <person name="Howarth S."/>
            <person name="Huang C.-H."/>
            <person name="Kieser T."/>
            <person name="Larke L."/>
            <person name="Murphy L.D."/>
            <person name="Oliver K."/>
            <person name="O'Neil S."/>
            <person name="Rabbinowitsch E."/>
            <person name="Rajandream M.A."/>
            <person name="Rutherford K.M."/>
            <person name="Rutter S."/>
            <person name="Seeger K."/>
            <person name="Saunders D."/>
            <person name="Sharp S."/>
            <person name="Squares R."/>
            <person name="Squares S."/>
            <person name="Taylor K."/>
            <person name="Warren T."/>
            <person name="Wietzorrek A."/>
            <person name="Woodward J.R."/>
            <person name="Barrell B.G."/>
            <person name="Parkhill J."/>
            <person name="Hopwood D.A."/>
        </authorList>
    </citation>
    <scope>NUCLEOTIDE SEQUENCE [LARGE SCALE GENOMIC DNA]</scope>
    <source>
        <strain>ATCC BAA-471 / A3(2) / M145</strain>
    </source>
</reference>
<protein>
    <recommendedName>
        <fullName evidence="1">Chaperonin GroEL 2</fullName>
        <ecNumber evidence="1">5.6.1.7</ecNumber>
    </recommendedName>
    <alternativeName>
        <fullName evidence="1">60 kDa chaperonin 2</fullName>
    </alternativeName>
    <alternativeName>
        <fullName evidence="1">Chaperonin-60 2</fullName>
        <shortName evidence="1">Cpn60 2</shortName>
    </alternativeName>
</protein>
<evidence type="ECO:0000255" key="1">
    <source>
        <dbReference type="HAMAP-Rule" id="MF_00600"/>
    </source>
</evidence>
<name>CH602_STRCO</name>
<keyword id="KW-0067">ATP-binding</keyword>
<keyword id="KW-0143">Chaperone</keyword>
<keyword id="KW-0963">Cytoplasm</keyword>
<keyword id="KW-0413">Isomerase</keyword>
<keyword id="KW-0547">Nucleotide-binding</keyword>
<keyword id="KW-1185">Reference proteome</keyword>
<sequence length="541" mass="56830">MAKIIAFDEEARRGLERGMNQLADAVKVTLGPKGRNVVLEKKWGAPTITNDGVSIAKEIELEDPYEKIGAELVKEVAKKTDDVAGDGTTTATVLAQALVKEGLRNVAAGANPMALKRGIEKAVEAVSAALLEQAKDVETKEQIASTASISAADTQIGELIAEAMDKVGKEGVITVEESQTFGLELELTEGMRFDKGYISAYFATDMERMEASLDDPYILIANSKIGNVKDLLPLLEKVMQSGKPLLIIAEDVEGEALSTLVVNKIRGTFKSVAVKAPGFGDRRKAMLGDIAILTGGEVISEEVGLKLENATLDLLGSARKVVITKDETTIVDGAGSADQVQGRVNQIRAEIENSDSDYDREKLQERLAKLAGGVAVIKAGAATEVELKERKHRIEDAVRNAKAAVEEGIVAGGGVALLQASQVFEKLELTGDEATGANAVKLALEAPLKQIAVNGGLEGGVVVEKVRNLTVGHGLNAATGEYVDMIAEGIIDPAKVTRSALQNAASIAALFLTTEAVIADKPEKAAPAGAPGGMPGGDMDF</sequence>
<comment type="function">
    <text evidence="1">Together with its co-chaperonin GroES, plays an essential role in assisting protein folding. The GroEL-GroES system forms a nano-cage that allows encapsulation of the non-native substrate proteins and provides a physical environment optimized to promote and accelerate protein folding.</text>
</comment>
<comment type="catalytic activity">
    <reaction evidence="1">
        <text>ATP + H2O + a folded polypeptide = ADP + phosphate + an unfolded polypeptide.</text>
        <dbReference type="EC" id="5.6.1.7"/>
    </reaction>
</comment>
<comment type="subunit">
    <text evidence="1">Forms a cylinder of 14 subunits composed of two heptameric rings stacked back-to-back. Interacts with the co-chaperonin GroES.</text>
</comment>
<comment type="subcellular location">
    <subcellularLocation>
        <location evidence="1">Cytoplasm</location>
    </subcellularLocation>
</comment>
<comment type="similarity">
    <text evidence="1">Belongs to the chaperonin (HSP60) family.</text>
</comment>
<feature type="chain" id="PRO_0000063550" description="Chaperonin GroEL 2">
    <location>
        <begin position="1"/>
        <end position="541"/>
    </location>
</feature>
<feature type="binding site" evidence="1">
    <location>
        <begin position="29"/>
        <end position="32"/>
    </location>
    <ligand>
        <name>ATP</name>
        <dbReference type="ChEBI" id="CHEBI:30616"/>
    </ligand>
</feature>
<feature type="binding site" evidence="1">
    <location>
        <begin position="86"/>
        <end position="90"/>
    </location>
    <ligand>
        <name>ATP</name>
        <dbReference type="ChEBI" id="CHEBI:30616"/>
    </ligand>
</feature>
<feature type="binding site" evidence="1">
    <location>
        <position position="413"/>
    </location>
    <ligand>
        <name>ATP</name>
        <dbReference type="ChEBI" id="CHEBI:30616"/>
    </ligand>
</feature>
<feature type="binding site" evidence="1">
    <location>
        <begin position="476"/>
        <end position="478"/>
    </location>
    <ligand>
        <name>ATP</name>
        <dbReference type="ChEBI" id="CHEBI:30616"/>
    </ligand>
</feature>
<feature type="binding site" evidence="1">
    <location>
        <position position="492"/>
    </location>
    <ligand>
        <name>ATP</name>
        <dbReference type="ChEBI" id="CHEBI:30616"/>
    </ligand>
</feature>
<organism>
    <name type="scientific">Streptomyces coelicolor (strain ATCC BAA-471 / A3(2) / M145)</name>
    <dbReference type="NCBI Taxonomy" id="100226"/>
    <lineage>
        <taxon>Bacteria</taxon>
        <taxon>Bacillati</taxon>
        <taxon>Actinomycetota</taxon>
        <taxon>Actinomycetes</taxon>
        <taxon>Kitasatosporales</taxon>
        <taxon>Streptomycetaceae</taxon>
        <taxon>Streptomyces</taxon>
        <taxon>Streptomyces albidoflavus group</taxon>
    </lineage>
</organism>
<proteinExistence type="inferred from homology"/>